<dbReference type="EC" id="7.4.2.8" evidence="1"/>
<dbReference type="EMBL" id="BA000039">
    <property type="protein sequence ID" value="BAC09403.1"/>
    <property type="molecule type" value="Genomic_DNA"/>
</dbReference>
<dbReference type="RefSeq" id="NP_682641.1">
    <property type="nucleotide sequence ID" value="NC_004113.1"/>
</dbReference>
<dbReference type="RefSeq" id="WP_011057688.1">
    <property type="nucleotide sequence ID" value="NC_004113.1"/>
</dbReference>
<dbReference type="SMR" id="Q8DHU4"/>
<dbReference type="STRING" id="197221.gene:10748457"/>
<dbReference type="EnsemblBacteria" id="BAC09403">
    <property type="protein sequence ID" value="BAC09403"/>
    <property type="gene ID" value="BAC09403"/>
</dbReference>
<dbReference type="KEGG" id="tel:tll1851"/>
<dbReference type="PATRIC" id="fig|197221.4.peg.1934"/>
<dbReference type="eggNOG" id="COG0653">
    <property type="taxonomic scope" value="Bacteria"/>
</dbReference>
<dbReference type="Proteomes" id="UP000000440">
    <property type="component" value="Chromosome"/>
</dbReference>
<dbReference type="GO" id="GO:0031522">
    <property type="term" value="C:cell envelope Sec protein transport complex"/>
    <property type="evidence" value="ECO:0007669"/>
    <property type="project" value="TreeGrafter"/>
</dbReference>
<dbReference type="GO" id="GO:0005829">
    <property type="term" value="C:cytosol"/>
    <property type="evidence" value="ECO:0007669"/>
    <property type="project" value="TreeGrafter"/>
</dbReference>
<dbReference type="GO" id="GO:0031676">
    <property type="term" value="C:plasma membrane-derived thylakoid membrane"/>
    <property type="evidence" value="ECO:0007669"/>
    <property type="project" value="UniProtKB-SubCell"/>
</dbReference>
<dbReference type="GO" id="GO:0005524">
    <property type="term" value="F:ATP binding"/>
    <property type="evidence" value="ECO:0007669"/>
    <property type="project" value="UniProtKB-UniRule"/>
</dbReference>
<dbReference type="GO" id="GO:0008564">
    <property type="term" value="F:protein-exporting ATPase activity"/>
    <property type="evidence" value="ECO:0007669"/>
    <property type="project" value="UniProtKB-EC"/>
</dbReference>
<dbReference type="GO" id="GO:0065002">
    <property type="term" value="P:intracellular protein transmembrane transport"/>
    <property type="evidence" value="ECO:0007669"/>
    <property type="project" value="UniProtKB-UniRule"/>
</dbReference>
<dbReference type="GO" id="GO:0017038">
    <property type="term" value="P:protein import"/>
    <property type="evidence" value="ECO:0007669"/>
    <property type="project" value="InterPro"/>
</dbReference>
<dbReference type="GO" id="GO:0006605">
    <property type="term" value="P:protein targeting"/>
    <property type="evidence" value="ECO:0007669"/>
    <property type="project" value="UniProtKB-UniRule"/>
</dbReference>
<dbReference type="GO" id="GO:0043952">
    <property type="term" value="P:protein transport by the Sec complex"/>
    <property type="evidence" value="ECO:0007669"/>
    <property type="project" value="TreeGrafter"/>
</dbReference>
<dbReference type="CDD" id="cd17928">
    <property type="entry name" value="DEXDc_SecA"/>
    <property type="match status" value="1"/>
</dbReference>
<dbReference type="CDD" id="cd18803">
    <property type="entry name" value="SF2_C_secA"/>
    <property type="match status" value="1"/>
</dbReference>
<dbReference type="FunFam" id="3.90.1440.10:FF:000003">
    <property type="entry name" value="Preprotein translocase SecA subunit"/>
    <property type="match status" value="1"/>
</dbReference>
<dbReference type="FunFam" id="3.40.50.300:FF:000429">
    <property type="entry name" value="Preprotein translocase subunit SecA"/>
    <property type="match status" value="1"/>
</dbReference>
<dbReference type="FunFam" id="1.10.3060.10:FF:000003">
    <property type="entry name" value="Protein translocase subunit SecA"/>
    <property type="match status" value="1"/>
</dbReference>
<dbReference type="FunFam" id="3.40.50.300:FF:000334">
    <property type="entry name" value="Protein translocase subunit SecA"/>
    <property type="match status" value="1"/>
</dbReference>
<dbReference type="Gene3D" id="1.10.3060.10">
    <property type="entry name" value="Helical scaffold and wing domains of SecA"/>
    <property type="match status" value="1"/>
</dbReference>
<dbReference type="Gene3D" id="3.40.50.300">
    <property type="entry name" value="P-loop containing nucleotide triphosphate hydrolases"/>
    <property type="match status" value="2"/>
</dbReference>
<dbReference type="Gene3D" id="3.90.1440.10">
    <property type="entry name" value="SecA, preprotein cross-linking domain"/>
    <property type="match status" value="1"/>
</dbReference>
<dbReference type="HAMAP" id="MF_01382">
    <property type="entry name" value="SecA"/>
    <property type="match status" value="1"/>
</dbReference>
<dbReference type="InterPro" id="IPR014001">
    <property type="entry name" value="Helicase_ATP-bd"/>
</dbReference>
<dbReference type="InterPro" id="IPR027417">
    <property type="entry name" value="P-loop_NTPase"/>
</dbReference>
<dbReference type="InterPro" id="IPR000185">
    <property type="entry name" value="SecA"/>
</dbReference>
<dbReference type="InterPro" id="IPR020937">
    <property type="entry name" value="SecA_CS"/>
</dbReference>
<dbReference type="InterPro" id="IPR011115">
    <property type="entry name" value="SecA_DEAD"/>
</dbReference>
<dbReference type="InterPro" id="IPR014018">
    <property type="entry name" value="SecA_motor_DEAD"/>
</dbReference>
<dbReference type="InterPro" id="IPR011130">
    <property type="entry name" value="SecA_preprotein_X-link_dom"/>
</dbReference>
<dbReference type="InterPro" id="IPR044722">
    <property type="entry name" value="SecA_SF2_C"/>
</dbReference>
<dbReference type="InterPro" id="IPR011116">
    <property type="entry name" value="SecA_Wing/Scaffold"/>
</dbReference>
<dbReference type="InterPro" id="IPR036266">
    <property type="entry name" value="SecA_Wing/Scaffold_sf"/>
</dbReference>
<dbReference type="InterPro" id="IPR036670">
    <property type="entry name" value="SecA_X-link_sf"/>
</dbReference>
<dbReference type="NCBIfam" id="NF009538">
    <property type="entry name" value="PRK12904.1"/>
    <property type="match status" value="1"/>
</dbReference>
<dbReference type="NCBIfam" id="TIGR00963">
    <property type="entry name" value="secA"/>
    <property type="match status" value="1"/>
</dbReference>
<dbReference type="PANTHER" id="PTHR30612:SF0">
    <property type="entry name" value="CHLOROPLAST PROTEIN-TRANSPORTING ATPASE"/>
    <property type="match status" value="1"/>
</dbReference>
<dbReference type="PANTHER" id="PTHR30612">
    <property type="entry name" value="SECA INNER MEMBRANE COMPONENT OF SEC PROTEIN SECRETION SYSTEM"/>
    <property type="match status" value="1"/>
</dbReference>
<dbReference type="Pfam" id="PF21090">
    <property type="entry name" value="P-loop_SecA"/>
    <property type="match status" value="1"/>
</dbReference>
<dbReference type="Pfam" id="PF07517">
    <property type="entry name" value="SecA_DEAD"/>
    <property type="match status" value="1"/>
</dbReference>
<dbReference type="Pfam" id="PF01043">
    <property type="entry name" value="SecA_PP_bind"/>
    <property type="match status" value="1"/>
</dbReference>
<dbReference type="Pfam" id="PF07516">
    <property type="entry name" value="SecA_SW"/>
    <property type="match status" value="1"/>
</dbReference>
<dbReference type="PRINTS" id="PR00906">
    <property type="entry name" value="SECA"/>
</dbReference>
<dbReference type="SMART" id="SM00957">
    <property type="entry name" value="SecA_DEAD"/>
    <property type="match status" value="1"/>
</dbReference>
<dbReference type="SMART" id="SM00958">
    <property type="entry name" value="SecA_PP_bind"/>
    <property type="match status" value="1"/>
</dbReference>
<dbReference type="SUPFAM" id="SSF81886">
    <property type="entry name" value="Helical scaffold and wing domains of SecA"/>
    <property type="match status" value="1"/>
</dbReference>
<dbReference type="SUPFAM" id="SSF52540">
    <property type="entry name" value="P-loop containing nucleoside triphosphate hydrolases"/>
    <property type="match status" value="2"/>
</dbReference>
<dbReference type="SUPFAM" id="SSF81767">
    <property type="entry name" value="Pre-protein crosslinking domain of SecA"/>
    <property type="match status" value="1"/>
</dbReference>
<dbReference type="PROSITE" id="PS01312">
    <property type="entry name" value="SECA"/>
    <property type="match status" value="1"/>
</dbReference>
<dbReference type="PROSITE" id="PS51196">
    <property type="entry name" value="SECA_MOTOR_DEAD"/>
    <property type="match status" value="1"/>
</dbReference>
<sequence>MLKALFGDPNQRKVKKYQPLVVEINLLEEQVQALSDSELQAKTAEFRQRLDNGETLDDLLPEAFAVVREASRRVLGMRHFDVQLIGGMILHDGQIAEMKTGEGKTLVATLPAYLNALTGKGVHIVTVNDYLARRDAEWMGQVHRFLGLTVGLIQQQMAPQERQKSYACDITYATNSEIGFDYLRDNMATSMVEVVQRPFNYCIIDEVDSVLIDEARTPLIISGQVERPTEKYLKAAEIARLLKKDEHYEVDEKARNVLMTDEGFIEAEKLLGVSDLYDPQDPWAHYIFNAIKAKELFQRDVNYIVRNGEVVIVDEFTGRVMVGRRWSDGLHQAIEAKEGLEIQNESQTLATITYQNLFLLYPKLAGMTGTAKTEEAEFEKIYKLEVTVVPTNRPSQRRDFPDVVYKTERAKWLAVASECAEVHATGRPVLVGTTSVEKSELLSQLLRELEIPHNLLNAKPENVEREAEIIAQAGRKGAVTISTNMAGRGTDIILGGNADYMARLKVREYFMPRIVMPPSDDPMMLLGLKMDRGGGQGFSQGAQKNWKASPGLFPCEMSKEAEKLLRHAVDVAVKTYGERSLPELQAEDMLAIASEKAPTEDPVIQALRDAFNRIREEYEVVTKKEHEEVVALGGLHVIGTERHESRRIDNQLRGRAGRQGDPGSTRFFLSLEDNLLRIFGGDRIASIMNAMRIDEDMPIESPLLTRSLENAQRKVETYYYDIRKQVFEYDEVMNNQRRAIYAERRRVLEGEDLKDRVLEYAEKTMDDIIAAYVNPDLPPEEWDLEGLVAKVQEFVYLLADLRPEHLAHLSVPEMQAFLHEQVRTAYEQKEAQIEAIQPGLMRQAERFFILQQIDLLWREHLQQMDALRESVGLRGYGQEDPLVEYKREGYELFLDMMVMIRRNVVYSLFQFQPQVAPPPEQVSSSSEQG</sequence>
<protein>
    <recommendedName>
        <fullName evidence="1">Protein translocase subunit SecA</fullName>
        <ecNumber evidence="1">7.4.2.8</ecNumber>
    </recommendedName>
</protein>
<gene>
    <name evidence="1" type="primary">secA</name>
    <name type="ordered locus">tll1851</name>
</gene>
<organism>
    <name type="scientific">Thermosynechococcus vestitus (strain NIES-2133 / IAM M-273 / BP-1)</name>
    <dbReference type="NCBI Taxonomy" id="197221"/>
    <lineage>
        <taxon>Bacteria</taxon>
        <taxon>Bacillati</taxon>
        <taxon>Cyanobacteriota</taxon>
        <taxon>Cyanophyceae</taxon>
        <taxon>Acaryochloridales</taxon>
        <taxon>Thermosynechococcaceae</taxon>
        <taxon>Thermosynechococcus</taxon>
    </lineage>
</organism>
<comment type="function">
    <text evidence="1">Part of the Sec protein translocase complex. Interacts with the SecYEG preprotein conducting channel. Has a central role in coupling the hydrolysis of ATP to the transfer of proteins into and across the cell membrane, serving as an ATP-driven molecular motor driving the stepwise translocation of polypeptide chains across the membrane.</text>
</comment>
<comment type="function">
    <text evidence="1">Probably participates in protein translocation into and across both the cytoplasmic and thylakoid membranes in cyanobacterial cells.</text>
</comment>
<comment type="catalytic activity">
    <reaction evidence="1">
        <text>ATP + H2O + cellular proteinSide 1 = ADP + phosphate + cellular proteinSide 2.</text>
        <dbReference type="EC" id="7.4.2.8"/>
    </reaction>
</comment>
<comment type="subunit">
    <text evidence="1">Monomer and homodimer. Part of the essential Sec protein translocation apparatus which comprises SecA, SecYEG and auxiliary proteins SecDF. Other proteins may also be involved.</text>
</comment>
<comment type="subcellular location">
    <subcellularLocation>
        <location evidence="1">Cell inner membrane</location>
        <topology evidence="1">Peripheral membrane protein</topology>
        <orientation evidence="1">Cytoplasmic side</orientation>
    </subcellularLocation>
    <subcellularLocation>
        <location evidence="1">Cellular thylakoid membrane</location>
        <topology evidence="1">Peripheral membrane protein</topology>
        <orientation evidence="1">Cytoplasmic side</orientation>
    </subcellularLocation>
    <subcellularLocation>
        <location evidence="1">Cytoplasm</location>
    </subcellularLocation>
</comment>
<comment type="similarity">
    <text evidence="1">Belongs to the SecA family.</text>
</comment>
<feature type="chain" id="PRO_0000318466" description="Protein translocase subunit SecA">
    <location>
        <begin position="1"/>
        <end position="929"/>
    </location>
</feature>
<feature type="binding site" evidence="1">
    <location>
        <position position="83"/>
    </location>
    <ligand>
        <name>ATP</name>
        <dbReference type="ChEBI" id="CHEBI:30616"/>
    </ligand>
</feature>
<feature type="binding site" evidence="1">
    <location>
        <begin position="101"/>
        <end position="105"/>
    </location>
    <ligand>
        <name>ATP</name>
        <dbReference type="ChEBI" id="CHEBI:30616"/>
    </ligand>
</feature>
<feature type="binding site" evidence="1">
    <location>
        <position position="491"/>
    </location>
    <ligand>
        <name>ATP</name>
        <dbReference type="ChEBI" id="CHEBI:30616"/>
    </ligand>
</feature>
<name>SECA_THEVB</name>
<accession>Q8DHU4</accession>
<reference key="1">
    <citation type="journal article" date="2002" name="DNA Res.">
        <title>Complete genome structure of the thermophilic cyanobacterium Thermosynechococcus elongatus BP-1.</title>
        <authorList>
            <person name="Nakamura Y."/>
            <person name="Kaneko T."/>
            <person name="Sato S."/>
            <person name="Ikeuchi M."/>
            <person name="Katoh H."/>
            <person name="Sasamoto S."/>
            <person name="Watanabe A."/>
            <person name="Iriguchi M."/>
            <person name="Kawashima K."/>
            <person name="Kimura T."/>
            <person name="Kishida Y."/>
            <person name="Kiyokawa C."/>
            <person name="Kohara M."/>
            <person name="Matsumoto M."/>
            <person name="Matsuno A."/>
            <person name="Nakazaki N."/>
            <person name="Shimpo S."/>
            <person name="Sugimoto M."/>
            <person name="Takeuchi C."/>
            <person name="Yamada M."/>
            <person name="Tabata S."/>
        </authorList>
    </citation>
    <scope>NUCLEOTIDE SEQUENCE [LARGE SCALE GENOMIC DNA]</scope>
    <source>
        <strain>NIES-2133 / IAM M-273 / BP-1</strain>
    </source>
</reference>
<keyword id="KW-0067">ATP-binding</keyword>
<keyword id="KW-0997">Cell inner membrane</keyword>
<keyword id="KW-1003">Cell membrane</keyword>
<keyword id="KW-0963">Cytoplasm</keyword>
<keyword id="KW-0472">Membrane</keyword>
<keyword id="KW-0547">Nucleotide-binding</keyword>
<keyword id="KW-0653">Protein transport</keyword>
<keyword id="KW-1185">Reference proteome</keyword>
<keyword id="KW-0793">Thylakoid</keyword>
<keyword id="KW-1278">Translocase</keyword>
<keyword id="KW-0811">Translocation</keyword>
<keyword id="KW-0813">Transport</keyword>
<evidence type="ECO:0000255" key="1">
    <source>
        <dbReference type="HAMAP-Rule" id="MF_01382"/>
    </source>
</evidence>
<proteinExistence type="inferred from homology"/>